<proteinExistence type="evidence at transcript level"/>
<organism>
    <name type="scientific">Gallus gallus</name>
    <name type="common">Chicken</name>
    <dbReference type="NCBI Taxonomy" id="9031"/>
    <lineage>
        <taxon>Eukaryota</taxon>
        <taxon>Metazoa</taxon>
        <taxon>Chordata</taxon>
        <taxon>Craniata</taxon>
        <taxon>Vertebrata</taxon>
        <taxon>Euteleostomi</taxon>
        <taxon>Archelosauria</taxon>
        <taxon>Archosauria</taxon>
        <taxon>Dinosauria</taxon>
        <taxon>Saurischia</taxon>
        <taxon>Theropoda</taxon>
        <taxon>Coelurosauria</taxon>
        <taxon>Aves</taxon>
        <taxon>Neognathae</taxon>
        <taxon>Galloanserae</taxon>
        <taxon>Galliformes</taxon>
        <taxon>Phasianidae</taxon>
        <taxon>Phasianinae</taxon>
        <taxon>Gallus</taxon>
    </lineage>
</organism>
<accession>A0A8V0ZLT4</accession>
<dbReference type="EMBL" id="AADN05000303">
    <property type="status" value="NOT_ANNOTATED_CDS"/>
    <property type="molecule type" value="Genomic_RNA"/>
</dbReference>
<dbReference type="SMR" id="A0A8V0ZLT4"/>
<dbReference type="GlyGen" id="A0A8V0ZLT4">
    <property type="glycosylation" value="2 sites"/>
</dbReference>
<dbReference type="Ensembl" id="ENSGALT00010052775.1">
    <property type="protein sequence ID" value="ENSGALP00010031682.1"/>
    <property type="gene ID" value="ENSGALG00010021714.1"/>
</dbReference>
<dbReference type="Ensembl" id="ENSGALT00015022072">
    <property type="protein sequence ID" value="ENSGALP00015012591"/>
    <property type="gene ID" value="ENSGALG00015009120"/>
</dbReference>
<dbReference type="GeneTree" id="ENSGT00940000157667"/>
<dbReference type="OrthoDB" id="71600at2759"/>
<dbReference type="PRO" id="PR:A0A8V0ZLT4"/>
<dbReference type="Proteomes" id="UP000000539">
    <property type="component" value="Chromosome 5"/>
</dbReference>
<dbReference type="GO" id="GO:0016020">
    <property type="term" value="C:membrane"/>
    <property type="evidence" value="ECO:0007669"/>
    <property type="project" value="UniProtKB-SubCell"/>
</dbReference>
<dbReference type="GO" id="GO:0090301">
    <property type="term" value="P:negative regulation of neural crest formation"/>
    <property type="evidence" value="ECO:0000315"/>
    <property type="project" value="UniProtKB"/>
</dbReference>
<dbReference type="GO" id="GO:1903670">
    <property type="term" value="P:regulation of sprouting angiogenesis"/>
    <property type="evidence" value="ECO:0000250"/>
    <property type="project" value="UniProtKB"/>
</dbReference>
<dbReference type="CDD" id="cd03156">
    <property type="entry name" value="uroplakin_I_like_LEL"/>
    <property type="match status" value="1"/>
</dbReference>
<dbReference type="FunFam" id="1.10.1450.10:FF:000012">
    <property type="entry name" value="Tetraspanin"/>
    <property type="match status" value="1"/>
</dbReference>
<dbReference type="Gene3D" id="1.10.1450.10">
    <property type="entry name" value="Tetraspanin"/>
    <property type="match status" value="1"/>
</dbReference>
<dbReference type="InterPro" id="IPR018499">
    <property type="entry name" value="Tetraspanin/Peripherin"/>
</dbReference>
<dbReference type="InterPro" id="IPR000301">
    <property type="entry name" value="Tetraspanin_animals"/>
</dbReference>
<dbReference type="InterPro" id="IPR018503">
    <property type="entry name" value="Tetraspanin_CS"/>
</dbReference>
<dbReference type="InterPro" id="IPR008952">
    <property type="entry name" value="Tetraspanin_EC2_sf"/>
</dbReference>
<dbReference type="PANTHER" id="PTHR19282">
    <property type="entry name" value="TETRASPANIN"/>
    <property type="match status" value="1"/>
</dbReference>
<dbReference type="PANTHER" id="PTHR19282:SF249">
    <property type="entry name" value="TETRASPANIN-18"/>
    <property type="match status" value="1"/>
</dbReference>
<dbReference type="Pfam" id="PF00335">
    <property type="entry name" value="Tetraspanin"/>
    <property type="match status" value="1"/>
</dbReference>
<dbReference type="PIRSF" id="PIRSF002419">
    <property type="entry name" value="Tetraspanin"/>
    <property type="match status" value="1"/>
</dbReference>
<dbReference type="PRINTS" id="PR00259">
    <property type="entry name" value="TMFOUR"/>
</dbReference>
<dbReference type="SUPFAM" id="SSF48652">
    <property type="entry name" value="Tetraspanin"/>
    <property type="match status" value="1"/>
</dbReference>
<dbReference type="PROSITE" id="PS00212">
    <property type="entry name" value="ALBUMIN_1"/>
    <property type="match status" value="1"/>
</dbReference>
<dbReference type="PROSITE" id="PS00421">
    <property type="entry name" value="TM4_1"/>
    <property type="match status" value="1"/>
</dbReference>
<name>TSN18_CHICK</name>
<feature type="chain" id="PRO_0000458890" description="Tetraspanin-18">
    <location>
        <begin position="1"/>
        <end position="247"/>
    </location>
</feature>
<feature type="topological domain" description="Cytoplasmic" evidence="7">
    <location>
        <begin position="1"/>
        <end position="15"/>
    </location>
</feature>
<feature type="transmembrane region" description="Helical" evidence="2">
    <location>
        <begin position="16"/>
        <end position="36"/>
    </location>
</feature>
<feature type="topological domain" description="Extracellular" evidence="7">
    <location>
        <begin position="37"/>
        <end position="49"/>
    </location>
</feature>
<feature type="transmembrane region" description="Helical" evidence="2">
    <location>
        <begin position="50"/>
        <end position="70"/>
    </location>
</feature>
<feature type="topological domain" description="Cytoplasmic" evidence="7">
    <location>
        <begin position="71"/>
        <end position="82"/>
    </location>
</feature>
<feature type="transmembrane region" description="Helical" evidence="2">
    <location>
        <begin position="83"/>
        <end position="103"/>
    </location>
</feature>
<feature type="topological domain" description="Extracellular" evidence="7">
    <location>
        <begin position="104"/>
        <end position="222"/>
    </location>
</feature>
<feature type="transmembrane region" description="Helical" evidence="2">
    <location>
        <begin position="223"/>
        <end position="243"/>
    </location>
</feature>
<feature type="topological domain" description="Cytoplasmic" evidence="7">
    <location>
        <begin position="244"/>
        <end position="247"/>
    </location>
</feature>
<feature type="glycosylation site" description="N-linked (GlcNAc...) asparagine" evidence="3">
    <location>
        <position position="111"/>
    </location>
</feature>
<feature type="glycosylation site" description="N-linked (GlcNAc...) asparagine" evidence="3">
    <location>
        <position position="129"/>
    </location>
</feature>
<keyword id="KW-0325">Glycoprotein</keyword>
<keyword id="KW-0472">Membrane</keyword>
<keyword id="KW-1185">Reference proteome</keyword>
<keyword id="KW-0812">Transmembrane</keyword>
<keyword id="KW-1133">Transmembrane helix</keyword>
<reference key="1">
    <citation type="journal article" date="2004" name="Nature">
        <title>Sequence and comparative analysis of the chicken genome provide unique perspectives on vertebrate evolution.</title>
        <authorList>
            <person name="Hillier L.W."/>
            <person name="Miller W."/>
            <person name="Birney E."/>
            <person name="Warren W."/>
            <person name="Hardison R.C."/>
            <person name="Ponting C.P."/>
            <person name="Bork P."/>
            <person name="Burt D.W."/>
            <person name="Groenen M.A.M."/>
            <person name="Delany M.E."/>
            <person name="Dodgson J.B."/>
            <person name="Chinwalla A.T."/>
            <person name="Cliften P.F."/>
            <person name="Clifton S.W."/>
            <person name="Delehaunty K.D."/>
            <person name="Fronick C."/>
            <person name="Fulton R.S."/>
            <person name="Graves T.A."/>
            <person name="Kremitzki C."/>
            <person name="Layman D."/>
            <person name="Magrini V."/>
            <person name="McPherson J.D."/>
            <person name="Miner T.L."/>
            <person name="Minx P."/>
            <person name="Nash W.E."/>
            <person name="Nhan M.N."/>
            <person name="Nelson J.O."/>
            <person name="Oddy L.G."/>
            <person name="Pohl C.S."/>
            <person name="Randall-Maher J."/>
            <person name="Smith S.M."/>
            <person name="Wallis J.W."/>
            <person name="Yang S.-P."/>
            <person name="Romanov M.N."/>
            <person name="Rondelli C.M."/>
            <person name="Paton B."/>
            <person name="Smith J."/>
            <person name="Morrice D."/>
            <person name="Daniels L."/>
            <person name="Tempest H.G."/>
            <person name="Robertson L."/>
            <person name="Masabanda J.S."/>
            <person name="Griffin D.K."/>
            <person name="Vignal A."/>
            <person name="Fillon V."/>
            <person name="Jacobbson L."/>
            <person name="Kerje S."/>
            <person name="Andersson L."/>
            <person name="Crooijmans R.P."/>
            <person name="Aerts J."/>
            <person name="van der Poel J.J."/>
            <person name="Ellegren H."/>
            <person name="Caldwell R.B."/>
            <person name="Hubbard S.J."/>
            <person name="Grafham D.V."/>
            <person name="Kierzek A.M."/>
            <person name="McLaren S.R."/>
            <person name="Overton I.M."/>
            <person name="Arakawa H."/>
            <person name="Beattie K.J."/>
            <person name="Bezzubov Y."/>
            <person name="Boardman P.E."/>
            <person name="Bonfield J.K."/>
            <person name="Croning M.D.R."/>
            <person name="Davies R.M."/>
            <person name="Francis M.D."/>
            <person name="Humphray S.J."/>
            <person name="Scott C.E."/>
            <person name="Taylor R.G."/>
            <person name="Tickle C."/>
            <person name="Brown W.R.A."/>
            <person name="Rogers J."/>
            <person name="Buerstedde J.-M."/>
            <person name="Wilson S.A."/>
            <person name="Stubbs L."/>
            <person name="Ovcharenko I."/>
            <person name="Gordon L."/>
            <person name="Lucas S."/>
            <person name="Miller M.M."/>
            <person name="Inoko H."/>
            <person name="Shiina T."/>
            <person name="Kaufman J."/>
            <person name="Salomonsen J."/>
            <person name="Skjoedt K."/>
            <person name="Wong G.K.-S."/>
            <person name="Wang J."/>
            <person name="Liu B."/>
            <person name="Wang J."/>
            <person name="Yu J."/>
            <person name="Yang H."/>
            <person name="Nefedov M."/>
            <person name="Koriabine M."/>
            <person name="Dejong P.J."/>
            <person name="Goodstadt L."/>
            <person name="Webber C."/>
            <person name="Dickens N.J."/>
            <person name="Letunic I."/>
            <person name="Suyama M."/>
            <person name="Torrents D."/>
            <person name="von Mering C."/>
            <person name="Zdobnov E.M."/>
            <person name="Makova K."/>
            <person name="Nekrutenko A."/>
            <person name="Elnitski L."/>
            <person name="Eswara P."/>
            <person name="King D.C."/>
            <person name="Yang S.-P."/>
            <person name="Tyekucheva S."/>
            <person name="Radakrishnan A."/>
            <person name="Harris R.S."/>
            <person name="Chiaromonte F."/>
            <person name="Taylor J."/>
            <person name="He J."/>
            <person name="Rijnkels M."/>
            <person name="Griffiths-Jones S."/>
            <person name="Ureta-Vidal A."/>
            <person name="Hoffman M.M."/>
            <person name="Severin J."/>
            <person name="Searle S.M.J."/>
            <person name="Law A.S."/>
            <person name="Speed D."/>
            <person name="Waddington D."/>
            <person name="Cheng Z."/>
            <person name="Tuzun E."/>
            <person name="Eichler E."/>
            <person name="Bao Z."/>
            <person name="Flicek P."/>
            <person name="Shteynberg D.D."/>
            <person name="Brent M.R."/>
            <person name="Bye J.M."/>
            <person name="Huckle E.J."/>
            <person name="Chatterji S."/>
            <person name="Dewey C."/>
            <person name="Pachter L."/>
            <person name="Kouranov A."/>
            <person name="Mourelatos Z."/>
            <person name="Hatzigeorgiou A.G."/>
            <person name="Paterson A.H."/>
            <person name="Ivarie R."/>
            <person name="Brandstrom M."/>
            <person name="Axelsson E."/>
            <person name="Backstrom N."/>
            <person name="Berlin S."/>
            <person name="Webster M.T."/>
            <person name="Pourquie O."/>
            <person name="Reymond A."/>
            <person name="Ucla C."/>
            <person name="Antonarakis S.E."/>
            <person name="Long M."/>
            <person name="Emerson J.J."/>
            <person name="Betran E."/>
            <person name="Dupanloup I."/>
            <person name="Kaessmann H."/>
            <person name="Hinrichs A.S."/>
            <person name="Bejerano G."/>
            <person name="Furey T.S."/>
            <person name="Harte R.A."/>
            <person name="Raney B."/>
            <person name="Siepel A."/>
            <person name="Kent W.J."/>
            <person name="Haussler D."/>
            <person name="Eyras E."/>
            <person name="Castelo R."/>
            <person name="Abril J.F."/>
            <person name="Castellano S."/>
            <person name="Camara F."/>
            <person name="Parra G."/>
            <person name="Guigo R."/>
            <person name="Bourque G."/>
            <person name="Tesler G."/>
            <person name="Pevzner P.A."/>
            <person name="Smit A."/>
            <person name="Fulton L.A."/>
            <person name="Mardis E.R."/>
            <person name="Wilson R.K."/>
        </authorList>
    </citation>
    <scope>NUCLEOTIDE SEQUENCE [LARGE SCALE GENOMIC DNA]</scope>
    <source>
        <strain>Red jungle fowl</strain>
    </source>
</reference>
<reference key="2">
    <citation type="journal article" date="2013" name="J. Cell Sci.">
        <title>Tetraspanin18 is a FoxD3-responsive antagonist of cranial neural crest epithelial-to-mesenchymal transition that maintains cadherin-6B protein.</title>
        <authorList>
            <person name="Fairchild C.L."/>
            <person name="Gammill L.S."/>
        </authorList>
    </citation>
    <scope>FUNCTION</scope>
    <scope>DEVELOPMENTAL STAGE</scope>
    <scope>INDUCTION</scope>
</reference>
<reference key="3">
    <citation type="journal article" date="2014" name="Mech. Dev.">
        <title>FoxD3 regulates cranial neural crest EMT via downregulation of tetraspanin18 independent of its functions during neural crest formation.</title>
        <authorList>
            <person name="Fairchild C.L."/>
            <person name="Conway J.P."/>
            <person name="Schiffmacher A.T."/>
            <person name="Taneyhill L.A."/>
            <person name="Gammill L.S."/>
        </authorList>
    </citation>
    <scope>DEVELOPMENTAL STAGE</scope>
    <scope>INDUCTION</scope>
</reference>
<comment type="function">
    <text evidence="4">Maintains CDH6 protein and promotes CDH6-dependent adherens junctions, inhibiting neural crest migration.</text>
</comment>
<comment type="subcellular location">
    <subcellularLocation>
        <location evidence="2">Membrane</location>
        <topology evidence="2">Multi-pass membrane protein</topology>
    </subcellularLocation>
</comment>
<comment type="developmental stage">
    <text evidence="4 5">Expressed in the cranial dorsal neural tube at 6 and 7 somites and expression is down-regulated in the dorsal neural tube and migratory neural crest cells by 8 somite (PubMed:23418345, PubMed:24582980). Between 5 and 8 somites, detected in the neural tube, head mesenchyme, epithelial somites, and developing vasculature (PubMed:23418345). Abundantly expressed in cranial premigratory neural crest cells in the neural folds at 3 somites (PubMed:23418345). Undetectable in the dorsal neural tube at 8 somites (PubMed:23418345). Undetectable in premigratory trunk neural crest cells at any stage (PubMed:23418345). Expression persists in the head mesenchyme, epithelial somites, and developing vasculature at both 10 and 16 somites (PubMed:23418345). Down-regulated in rostral somites that have dissociated into sclerotome and dermomyotome (PubMed:23418345).</text>
</comment>
<comment type="induction">
    <text evidence="4 5">Downrwgulated by FOXD3 during neural crest migration.</text>
</comment>
<comment type="similarity">
    <text evidence="7">Belongs to the tetraspanin (TM4SF) family.</text>
</comment>
<protein>
    <recommendedName>
        <fullName evidence="6">Tetraspanin-18</fullName>
        <shortName evidence="1">Tspan-18</shortName>
    </recommendedName>
</protein>
<evidence type="ECO:0000250" key="1">
    <source>
        <dbReference type="UniProtKB" id="Q96SJ8"/>
    </source>
</evidence>
<evidence type="ECO:0000255" key="2"/>
<evidence type="ECO:0000255" key="3">
    <source>
        <dbReference type="PROSITE-ProRule" id="PRU00498"/>
    </source>
</evidence>
<evidence type="ECO:0000269" key="4">
    <source>
    </source>
</evidence>
<evidence type="ECO:0000269" key="5">
    <source>
    </source>
</evidence>
<evidence type="ECO:0000303" key="6">
    <source>
    </source>
</evidence>
<evidence type="ECO:0000305" key="7"/>
<gene>
    <name evidence="1" type="primary">TSPAN18</name>
</gene>
<sequence>MEGDCLSCMKYLMFLFNFFIFLGGACLLGVGIWVIVDPTGFREIVAANPLLFTGAYIMLAMGAMLFLLGFLGCCGAIRENKCLLLFFFMFILLIFLAELSAAILAFIFRENLTREFFTKELKKHYVRNNDTHVFSSTWNSVMITFACCGVNGPEDFEAVPPLSHLPLEETTPEACCQRKLQSREGMFVNRKACLEGDERFQNRQGCYTVILNSFETYVYLAGALAIGVLAIELFAMIFAMCLFRGIQ</sequence>